<proteinExistence type="evidence at transcript level"/>
<reference key="1">
    <citation type="journal article" date="2002" name="Nature">
        <title>The genome sequence and structure of rice chromosome 1.</title>
        <authorList>
            <person name="Sasaki T."/>
            <person name="Matsumoto T."/>
            <person name="Yamamoto K."/>
            <person name="Sakata K."/>
            <person name="Baba T."/>
            <person name="Katayose Y."/>
            <person name="Wu J."/>
            <person name="Niimura Y."/>
            <person name="Cheng Z."/>
            <person name="Nagamura Y."/>
            <person name="Antonio B.A."/>
            <person name="Kanamori H."/>
            <person name="Hosokawa S."/>
            <person name="Masukawa M."/>
            <person name="Arikawa K."/>
            <person name="Chiden Y."/>
            <person name="Hayashi M."/>
            <person name="Okamoto M."/>
            <person name="Ando T."/>
            <person name="Aoki H."/>
            <person name="Arita K."/>
            <person name="Hamada M."/>
            <person name="Harada C."/>
            <person name="Hijishita S."/>
            <person name="Honda M."/>
            <person name="Ichikawa Y."/>
            <person name="Idonuma A."/>
            <person name="Iijima M."/>
            <person name="Ikeda M."/>
            <person name="Ikeno M."/>
            <person name="Ito S."/>
            <person name="Ito T."/>
            <person name="Ito Y."/>
            <person name="Ito Y."/>
            <person name="Iwabuchi A."/>
            <person name="Kamiya K."/>
            <person name="Karasawa W."/>
            <person name="Katagiri S."/>
            <person name="Kikuta A."/>
            <person name="Kobayashi N."/>
            <person name="Kono I."/>
            <person name="Machita K."/>
            <person name="Maehara T."/>
            <person name="Mizuno H."/>
            <person name="Mizubayashi T."/>
            <person name="Mukai Y."/>
            <person name="Nagasaki H."/>
            <person name="Nakashima M."/>
            <person name="Nakama Y."/>
            <person name="Nakamichi Y."/>
            <person name="Nakamura M."/>
            <person name="Namiki N."/>
            <person name="Negishi M."/>
            <person name="Ohta I."/>
            <person name="Ono N."/>
            <person name="Saji S."/>
            <person name="Sakai K."/>
            <person name="Shibata M."/>
            <person name="Shimokawa T."/>
            <person name="Shomura A."/>
            <person name="Song J."/>
            <person name="Takazaki Y."/>
            <person name="Terasawa K."/>
            <person name="Tsuji K."/>
            <person name="Waki K."/>
            <person name="Yamagata H."/>
            <person name="Yamane H."/>
            <person name="Yoshiki S."/>
            <person name="Yoshihara R."/>
            <person name="Yukawa K."/>
            <person name="Zhong H."/>
            <person name="Iwama H."/>
            <person name="Endo T."/>
            <person name="Ito H."/>
            <person name="Hahn J.H."/>
            <person name="Kim H.-I."/>
            <person name="Eun M.-Y."/>
            <person name="Yano M."/>
            <person name="Jiang J."/>
            <person name="Gojobori T."/>
        </authorList>
    </citation>
    <scope>NUCLEOTIDE SEQUENCE [LARGE SCALE GENOMIC DNA]</scope>
    <source>
        <strain>cv. Nipponbare</strain>
    </source>
</reference>
<reference key="2">
    <citation type="journal article" date="2005" name="Nature">
        <title>The map-based sequence of the rice genome.</title>
        <authorList>
            <consortium name="International rice genome sequencing project (IRGSP)"/>
        </authorList>
    </citation>
    <scope>NUCLEOTIDE SEQUENCE [LARGE SCALE GENOMIC DNA]</scope>
    <source>
        <strain>cv. Nipponbare</strain>
    </source>
</reference>
<reference key="3">
    <citation type="journal article" date="2008" name="Nucleic Acids Res.">
        <title>The rice annotation project database (RAP-DB): 2008 update.</title>
        <authorList>
            <consortium name="The rice annotation project (RAP)"/>
        </authorList>
    </citation>
    <scope>GENOME REANNOTATION</scope>
    <source>
        <strain>cv. Nipponbare</strain>
    </source>
</reference>
<reference key="4">
    <citation type="journal article" date="2013" name="Rice">
        <title>Improvement of the Oryza sativa Nipponbare reference genome using next generation sequence and optical map data.</title>
        <authorList>
            <person name="Kawahara Y."/>
            <person name="de la Bastide M."/>
            <person name="Hamilton J.P."/>
            <person name="Kanamori H."/>
            <person name="McCombie W.R."/>
            <person name="Ouyang S."/>
            <person name="Schwartz D.C."/>
            <person name="Tanaka T."/>
            <person name="Wu J."/>
            <person name="Zhou S."/>
            <person name="Childs K.L."/>
            <person name="Davidson R.M."/>
            <person name="Lin H."/>
            <person name="Quesada-Ocampo L."/>
            <person name="Vaillancourt B."/>
            <person name="Sakai H."/>
            <person name="Lee S.S."/>
            <person name="Kim J."/>
            <person name="Numa H."/>
            <person name="Itoh T."/>
            <person name="Buell C.R."/>
            <person name="Matsumoto T."/>
        </authorList>
    </citation>
    <scope>GENOME REANNOTATION</scope>
    <source>
        <strain>cv. Nipponbare</strain>
    </source>
</reference>
<reference key="5">
    <citation type="journal article" date="2005" name="PLoS Biol.">
        <title>The genomes of Oryza sativa: a history of duplications.</title>
        <authorList>
            <person name="Yu J."/>
            <person name="Wang J."/>
            <person name="Lin W."/>
            <person name="Li S."/>
            <person name="Li H."/>
            <person name="Zhou J."/>
            <person name="Ni P."/>
            <person name="Dong W."/>
            <person name="Hu S."/>
            <person name="Zeng C."/>
            <person name="Zhang J."/>
            <person name="Zhang Y."/>
            <person name="Li R."/>
            <person name="Xu Z."/>
            <person name="Li S."/>
            <person name="Li X."/>
            <person name="Zheng H."/>
            <person name="Cong L."/>
            <person name="Lin L."/>
            <person name="Yin J."/>
            <person name="Geng J."/>
            <person name="Li G."/>
            <person name="Shi J."/>
            <person name="Liu J."/>
            <person name="Lv H."/>
            <person name="Li J."/>
            <person name="Wang J."/>
            <person name="Deng Y."/>
            <person name="Ran L."/>
            <person name="Shi X."/>
            <person name="Wang X."/>
            <person name="Wu Q."/>
            <person name="Li C."/>
            <person name="Ren X."/>
            <person name="Wang J."/>
            <person name="Wang X."/>
            <person name="Li D."/>
            <person name="Liu D."/>
            <person name="Zhang X."/>
            <person name="Ji Z."/>
            <person name="Zhao W."/>
            <person name="Sun Y."/>
            <person name="Zhang Z."/>
            <person name="Bao J."/>
            <person name="Han Y."/>
            <person name="Dong L."/>
            <person name="Ji J."/>
            <person name="Chen P."/>
            <person name="Wu S."/>
            <person name="Liu J."/>
            <person name="Xiao Y."/>
            <person name="Bu D."/>
            <person name="Tan J."/>
            <person name="Yang L."/>
            <person name="Ye C."/>
            <person name="Zhang J."/>
            <person name="Xu J."/>
            <person name="Zhou Y."/>
            <person name="Yu Y."/>
            <person name="Zhang B."/>
            <person name="Zhuang S."/>
            <person name="Wei H."/>
            <person name="Liu B."/>
            <person name="Lei M."/>
            <person name="Yu H."/>
            <person name="Li Y."/>
            <person name="Xu H."/>
            <person name="Wei S."/>
            <person name="He X."/>
            <person name="Fang L."/>
            <person name="Zhang Z."/>
            <person name="Zhang Y."/>
            <person name="Huang X."/>
            <person name="Su Z."/>
            <person name="Tong W."/>
            <person name="Li J."/>
            <person name="Tong Z."/>
            <person name="Li S."/>
            <person name="Ye J."/>
            <person name="Wang L."/>
            <person name="Fang L."/>
            <person name="Lei T."/>
            <person name="Chen C.-S."/>
            <person name="Chen H.-C."/>
            <person name="Xu Z."/>
            <person name="Li H."/>
            <person name="Huang H."/>
            <person name="Zhang F."/>
            <person name="Xu H."/>
            <person name="Li N."/>
            <person name="Zhao C."/>
            <person name="Li S."/>
            <person name="Dong L."/>
            <person name="Huang Y."/>
            <person name="Li L."/>
            <person name="Xi Y."/>
            <person name="Qi Q."/>
            <person name="Li W."/>
            <person name="Zhang B."/>
            <person name="Hu W."/>
            <person name="Zhang Y."/>
            <person name="Tian X."/>
            <person name="Jiao Y."/>
            <person name="Liang X."/>
            <person name="Jin J."/>
            <person name="Gao L."/>
            <person name="Zheng W."/>
            <person name="Hao B."/>
            <person name="Liu S.-M."/>
            <person name="Wang W."/>
            <person name="Yuan L."/>
            <person name="Cao M."/>
            <person name="McDermott J."/>
            <person name="Samudrala R."/>
            <person name="Wang J."/>
            <person name="Wong G.K.-S."/>
            <person name="Yang H."/>
        </authorList>
    </citation>
    <scope>NUCLEOTIDE SEQUENCE [LARGE SCALE GENOMIC DNA]</scope>
    <source>
        <strain>cv. Nipponbare</strain>
    </source>
</reference>
<reference key="6">
    <citation type="journal article" date="2003" name="Science">
        <title>Collection, mapping, and annotation of over 28,000 cDNA clones from japonica rice.</title>
        <authorList>
            <consortium name="The rice full-length cDNA consortium"/>
        </authorList>
    </citation>
    <scope>NUCLEOTIDE SEQUENCE [LARGE SCALE MRNA]</scope>
    <source>
        <strain>cv. Nipponbare</strain>
    </source>
</reference>
<reference key="7">
    <citation type="journal article" date="1999" name="Plant Mol. Biol.">
        <title>Characterization and heterologous expression of laccase cDNAs from xylem tissues of yellow-poplar (Liriodendron tulipifera).</title>
        <authorList>
            <person name="LaFayette P.R."/>
            <person name="Eriksson K.E."/>
            <person name="Dean J.F."/>
        </authorList>
    </citation>
    <scope>NUCLEOTIDE SEQUENCE [MRNA] OF 36-579</scope>
    <source>
        <strain>cv. Nipponbare</strain>
        <tissue>Shoot</tissue>
    </source>
</reference>
<evidence type="ECO:0000250" key="1"/>
<evidence type="ECO:0000255" key="2"/>
<evidence type="ECO:0000305" key="3"/>
<name>LAC4_ORYSJ</name>
<dbReference type="EC" id="1.10.3.2"/>
<dbReference type="EMBL" id="AP003240">
    <property type="protein sequence ID" value="BAD81734.1"/>
    <property type="molecule type" value="Genomic_DNA"/>
</dbReference>
<dbReference type="EMBL" id="AP008207">
    <property type="protein sequence ID" value="BAF06686.1"/>
    <property type="molecule type" value="Genomic_DNA"/>
</dbReference>
<dbReference type="EMBL" id="AP014957">
    <property type="protein sequence ID" value="BAS75167.1"/>
    <property type="molecule type" value="Genomic_DNA"/>
</dbReference>
<dbReference type="EMBL" id="CM000138">
    <property type="protein sequence ID" value="EAZ14115.1"/>
    <property type="status" value="ALT_INIT"/>
    <property type="molecule type" value="Genomic_DNA"/>
</dbReference>
<dbReference type="EMBL" id="AK068901">
    <property type="protein sequence ID" value="BAG91149.1"/>
    <property type="molecule type" value="mRNA"/>
</dbReference>
<dbReference type="EMBL" id="AF047697">
    <property type="protein sequence ID" value="AAC04576.1"/>
    <property type="molecule type" value="mRNA"/>
</dbReference>
<dbReference type="PIR" id="T02752">
    <property type="entry name" value="T02752"/>
</dbReference>
<dbReference type="RefSeq" id="XP_015632622.1">
    <property type="nucleotide sequence ID" value="XM_015777136.1"/>
</dbReference>
<dbReference type="SMR" id="Q5N9X2"/>
<dbReference type="FunCoup" id="Q5N9X2">
    <property type="interactions" value="50"/>
</dbReference>
<dbReference type="STRING" id="39947.Q5N9X2"/>
<dbReference type="GlyCosmos" id="Q5N9X2">
    <property type="glycosylation" value="15 sites, No reported glycans"/>
</dbReference>
<dbReference type="PaxDb" id="39947-Q5N9X2"/>
<dbReference type="EnsemblPlants" id="Os01t0842400-01">
    <property type="protein sequence ID" value="Os01t0842400-01"/>
    <property type="gene ID" value="Os01g0842400"/>
</dbReference>
<dbReference type="Gramene" id="Os01t0842400-01">
    <property type="protein sequence ID" value="Os01t0842400-01"/>
    <property type="gene ID" value="Os01g0842400"/>
</dbReference>
<dbReference type="KEGG" id="dosa:Os01g0842400"/>
<dbReference type="eggNOG" id="KOG1263">
    <property type="taxonomic scope" value="Eukaryota"/>
</dbReference>
<dbReference type="HOGENOM" id="CLU_006504_6_3_1"/>
<dbReference type="InParanoid" id="Q5N9X2"/>
<dbReference type="OMA" id="FHGINQI"/>
<dbReference type="OrthoDB" id="2121828at2759"/>
<dbReference type="Proteomes" id="UP000000763">
    <property type="component" value="Chromosome 1"/>
</dbReference>
<dbReference type="Proteomes" id="UP000007752">
    <property type="component" value="Chromosome 1"/>
</dbReference>
<dbReference type="Proteomes" id="UP000059680">
    <property type="component" value="Chromosome 1"/>
</dbReference>
<dbReference type="ExpressionAtlas" id="Q5N9X2">
    <property type="expression patterns" value="baseline and differential"/>
</dbReference>
<dbReference type="GO" id="GO:0048046">
    <property type="term" value="C:apoplast"/>
    <property type="evidence" value="ECO:0007669"/>
    <property type="project" value="UniProtKB-SubCell"/>
</dbReference>
<dbReference type="GO" id="GO:0005507">
    <property type="term" value="F:copper ion binding"/>
    <property type="evidence" value="ECO:0007669"/>
    <property type="project" value="InterPro"/>
</dbReference>
<dbReference type="GO" id="GO:0052716">
    <property type="term" value="F:hydroquinone:oxygen oxidoreductase activity"/>
    <property type="evidence" value="ECO:0007669"/>
    <property type="project" value="UniProtKB-EC"/>
</dbReference>
<dbReference type="GO" id="GO:0016491">
    <property type="term" value="F:oxidoreductase activity"/>
    <property type="evidence" value="ECO:0000318"/>
    <property type="project" value="GO_Central"/>
</dbReference>
<dbReference type="GO" id="GO:0046274">
    <property type="term" value="P:lignin catabolic process"/>
    <property type="evidence" value="ECO:0007669"/>
    <property type="project" value="UniProtKB-KW"/>
</dbReference>
<dbReference type="CDD" id="cd13849">
    <property type="entry name" value="CuRO_1_LCC_plant"/>
    <property type="match status" value="1"/>
</dbReference>
<dbReference type="CDD" id="cd13875">
    <property type="entry name" value="CuRO_2_LCC_plant"/>
    <property type="match status" value="1"/>
</dbReference>
<dbReference type="CDD" id="cd13897">
    <property type="entry name" value="CuRO_3_LCC_plant"/>
    <property type="match status" value="1"/>
</dbReference>
<dbReference type="FunFam" id="2.60.40.420:FF:000049">
    <property type="entry name" value="Laccase"/>
    <property type="match status" value="1"/>
</dbReference>
<dbReference type="FunFam" id="2.60.40.420:FF:000062">
    <property type="entry name" value="Laccase"/>
    <property type="match status" value="1"/>
</dbReference>
<dbReference type="Gene3D" id="2.60.40.420">
    <property type="entry name" value="Cupredoxins - blue copper proteins"/>
    <property type="match status" value="3"/>
</dbReference>
<dbReference type="InterPro" id="IPR011707">
    <property type="entry name" value="Cu-oxidase-like_N"/>
</dbReference>
<dbReference type="InterPro" id="IPR001117">
    <property type="entry name" value="Cu-oxidase_2nd"/>
</dbReference>
<dbReference type="InterPro" id="IPR011706">
    <property type="entry name" value="Cu-oxidase_C"/>
</dbReference>
<dbReference type="InterPro" id="IPR045087">
    <property type="entry name" value="Cu-oxidase_fam"/>
</dbReference>
<dbReference type="InterPro" id="IPR033138">
    <property type="entry name" value="Cu_oxidase_CS"/>
</dbReference>
<dbReference type="InterPro" id="IPR002355">
    <property type="entry name" value="Cu_oxidase_Cu_BS"/>
</dbReference>
<dbReference type="InterPro" id="IPR008972">
    <property type="entry name" value="Cupredoxin"/>
</dbReference>
<dbReference type="InterPro" id="IPR034288">
    <property type="entry name" value="CuRO_1_LCC"/>
</dbReference>
<dbReference type="InterPro" id="IPR034285">
    <property type="entry name" value="CuRO_2_LCC"/>
</dbReference>
<dbReference type="InterPro" id="IPR034289">
    <property type="entry name" value="CuRO_3_LCC"/>
</dbReference>
<dbReference type="InterPro" id="IPR017761">
    <property type="entry name" value="Laccase"/>
</dbReference>
<dbReference type="NCBIfam" id="TIGR03389">
    <property type="entry name" value="laccase"/>
    <property type="match status" value="1"/>
</dbReference>
<dbReference type="PANTHER" id="PTHR11709:SF522">
    <property type="entry name" value="LACCASE-4"/>
    <property type="match status" value="1"/>
</dbReference>
<dbReference type="PANTHER" id="PTHR11709">
    <property type="entry name" value="MULTI-COPPER OXIDASE"/>
    <property type="match status" value="1"/>
</dbReference>
<dbReference type="Pfam" id="PF00394">
    <property type="entry name" value="Cu-oxidase"/>
    <property type="match status" value="1"/>
</dbReference>
<dbReference type="Pfam" id="PF07731">
    <property type="entry name" value="Cu-oxidase_2"/>
    <property type="match status" value="1"/>
</dbReference>
<dbReference type="Pfam" id="PF07732">
    <property type="entry name" value="Cu-oxidase_3"/>
    <property type="match status" value="1"/>
</dbReference>
<dbReference type="SUPFAM" id="SSF49503">
    <property type="entry name" value="Cupredoxins"/>
    <property type="match status" value="3"/>
</dbReference>
<dbReference type="PROSITE" id="PS00079">
    <property type="entry name" value="MULTICOPPER_OXIDASE1"/>
    <property type="match status" value="1"/>
</dbReference>
<dbReference type="PROSITE" id="PS00080">
    <property type="entry name" value="MULTICOPPER_OXIDASE2"/>
    <property type="match status" value="1"/>
</dbReference>
<organism>
    <name type="scientific">Oryza sativa subsp. japonica</name>
    <name type="common">Rice</name>
    <dbReference type="NCBI Taxonomy" id="39947"/>
    <lineage>
        <taxon>Eukaryota</taxon>
        <taxon>Viridiplantae</taxon>
        <taxon>Streptophyta</taxon>
        <taxon>Embryophyta</taxon>
        <taxon>Tracheophyta</taxon>
        <taxon>Spermatophyta</taxon>
        <taxon>Magnoliopsida</taxon>
        <taxon>Liliopsida</taxon>
        <taxon>Poales</taxon>
        <taxon>Poaceae</taxon>
        <taxon>BOP clade</taxon>
        <taxon>Oryzoideae</taxon>
        <taxon>Oryzeae</taxon>
        <taxon>Oryzinae</taxon>
        <taxon>Oryza</taxon>
        <taxon>Oryza sativa</taxon>
    </lineage>
</organism>
<gene>
    <name type="primary">LAC4</name>
    <name type="ordered locus">Os01g0842400</name>
    <name type="ordered locus">LOC_Os01g62480</name>
    <name type="ORF">OsJ_003940</name>
    <name type="ORF">P0406G08.11</name>
</gene>
<keyword id="KW-0052">Apoplast</keyword>
<keyword id="KW-0186">Copper</keyword>
<keyword id="KW-0325">Glycoprotein</keyword>
<keyword id="KW-0439">Lignin degradation</keyword>
<keyword id="KW-0479">Metal-binding</keyword>
<keyword id="KW-0560">Oxidoreductase</keyword>
<keyword id="KW-1185">Reference proteome</keyword>
<keyword id="KW-0677">Repeat</keyword>
<keyword id="KW-0964">Secreted</keyword>
<keyword id="KW-0732">Signal</keyword>
<protein>
    <recommendedName>
        <fullName>Laccase-4</fullName>
        <ecNumber>1.10.3.2</ecNumber>
    </recommendedName>
    <alternativeName>
        <fullName>Benzenediol:oxygen oxidoreductase 4</fullName>
    </alternativeName>
    <alternativeName>
        <fullName>Diphenol oxidase 4</fullName>
    </alternativeName>
    <alternativeName>
        <fullName>Urishiol oxidase 4</fullName>
    </alternativeName>
</protein>
<comment type="function">
    <text evidence="1">Lignin degradation and detoxification of lignin-derived products.</text>
</comment>
<comment type="catalytic activity">
    <reaction>
        <text>4 hydroquinone + O2 = 4 benzosemiquinone + 2 H2O</text>
        <dbReference type="Rhea" id="RHEA:11276"/>
        <dbReference type="ChEBI" id="CHEBI:15377"/>
        <dbReference type="ChEBI" id="CHEBI:15379"/>
        <dbReference type="ChEBI" id="CHEBI:17594"/>
        <dbReference type="ChEBI" id="CHEBI:17977"/>
        <dbReference type="EC" id="1.10.3.2"/>
    </reaction>
</comment>
<comment type="cofactor">
    <cofactor evidence="1">
        <name>Cu cation</name>
        <dbReference type="ChEBI" id="CHEBI:23378"/>
    </cofactor>
    <text evidence="1">Binds 4 Cu cations per monomer.</text>
</comment>
<comment type="subcellular location">
    <subcellularLocation>
        <location evidence="3">Secreted</location>
        <location evidence="3">Extracellular space</location>
        <location evidence="3">Apoplast</location>
    </subcellularLocation>
</comment>
<comment type="similarity">
    <text evidence="3">Belongs to the multicopper oxidase family.</text>
</comment>
<comment type="sequence caution" evidence="3">
    <conflict type="erroneous initiation">
        <sequence resource="EMBL-CDS" id="EAZ14115"/>
    </conflict>
</comment>
<sequence>MTMAISSALPSPLLLAASLLLLIVQAQGITRHYEFNVQMANATRLCNTKSMVTVNGQCPGPELVAREGDRVVIRVTNNVAHNISLHWHGVRQVRTGWADGPAYITQCPIQTGQSYVYNFTVAGQRGTLWWHAHISWLRATVYGALVILPKLGVPYPFPAPHKEVPVIFGEWWNADTEEVVNQAVQTGGGPNVSDAFTINGLPGPLYNCSAQDTFKLKVKPGKTYMLRLINAALNEELFFAVANHTLTVVEVDAVYVKPFTVDTLVISPGQTTNVLLTAKPYYPGANFYMSAAPYSTARPGTFGNTTVAGILEYENPAMSPSAASFVKGLPLFKPTLPQLNDTDFVTNFTDKLRSLATPEYPAAVPQSVDKRFFFTVGLGTLPCPANMTCQGPNNTQMAASMNNVSFVLPARALLQSHFTGLSSGVYAPDFPVAPLSPFNYTGTPPNNTNVKTGTKLLVLRYNTSVELVMQDTSILGIESHPLHLHGFNFFVIGQGFGNYDAVNDPAKFNLVDPVERNTVGVPAGGWVAIRFLADNPGVWFMHCHLEAHTTWGLRMAWLVLDGSHPNQKLLPPPSDLPKC</sequence>
<feature type="signal peptide" evidence="2">
    <location>
        <begin position="1"/>
        <end position="28"/>
    </location>
</feature>
<feature type="chain" id="PRO_0000291889" description="Laccase-4">
    <location>
        <begin position="29"/>
        <end position="579"/>
    </location>
</feature>
<feature type="domain" description="Plastocyanin-like 1">
    <location>
        <begin position="36"/>
        <end position="152"/>
    </location>
</feature>
<feature type="domain" description="Plastocyanin-like 2">
    <location>
        <begin position="162"/>
        <end position="316"/>
    </location>
</feature>
<feature type="domain" description="Plastocyanin-like 3">
    <location>
        <begin position="429"/>
        <end position="563"/>
    </location>
</feature>
<feature type="binding site" evidence="1">
    <location>
        <position position="86"/>
    </location>
    <ligand>
        <name>Cu cation</name>
        <dbReference type="ChEBI" id="CHEBI:23378"/>
        <label>1</label>
    </ligand>
</feature>
<feature type="binding site" evidence="1">
    <location>
        <position position="88"/>
    </location>
    <ligand>
        <name>Cu cation</name>
        <dbReference type="ChEBI" id="CHEBI:23378"/>
        <label>2</label>
    </ligand>
</feature>
<feature type="binding site" evidence="1">
    <location>
        <position position="131"/>
    </location>
    <ligand>
        <name>Cu cation</name>
        <dbReference type="ChEBI" id="CHEBI:23378"/>
        <label>2</label>
    </ligand>
</feature>
<feature type="binding site" evidence="1">
    <location>
        <position position="133"/>
    </location>
    <ligand>
        <name>Cu cation</name>
        <dbReference type="ChEBI" id="CHEBI:23378"/>
        <label>3</label>
    </ligand>
</feature>
<feature type="binding site" evidence="1">
    <location>
        <position position="480"/>
    </location>
    <ligand>
        <name>Cu cation</name>
        <dbReference type="ChEBI" id="CHEBI:23378"/>
        <label>4</label>
    </ligand>
</feature>
<feature type="binding site" evidence="1">
    <location>
        <position position="483"/>
    </location>
    <ligand>
        <name>Cu cation</name>
        <dbReference type="ChEBI" id="CHEBI:23378"/>
        <label>1</label>
    </ligand>
</feature>
<feature type="binding site" evidence="1">
    <location>
        <position position="485"/>
    </location>
    <ligand>
        <name>Cu cation</name>
        <dbReference type="ChEBI" id="CHEBI:23378"/>
        <label>3</label>
    </ligand>
</feature>
<feature type="binding site" evidence="1">
    <location>
        <position position="542"/>
    </location>
    <ligand>
        <name>Cu cation</name>
        <dbReference type="ChEBI" id="CHEBI:23378"/>
        <label>3</label>
    </ligand>
</feature>
<feature type="binding site" evidence="1">
    <location>
        <position position="543"/>
    </location>
    <ligand>
        <name>Cu cation</name>
        <dbReference type="ChEBI" id="CHEBI:23378"/>
        <label>4</label>
    </ligand>
</feature>
<feature type="binding site" evidence="1">
    <location>
        <position position="544"/>
    </location>
    <ligand>
        <name>Cu cation</name>
        <dbReference type="ChEBI" id="CHEBI:23378"/>
        <label>2</label>
    </ligand>
</feature>
<feature type="binding site" evidence="1">
    <location>
        <position position="548"/>
    </location>
    <ligand>
        <name>Cu cation</name>
        <dbReference type="ChEBI" id="CHEBI:23378"/>
        <label>4</label>
    </ligand>
</feature>
<feature type="glycosylation site" description="N-linked (GlcNAc...) asparagine" evidence="2">
    <location>
        <position position="41"/>
    </location>
</feature>
<feature type="glycosylation site" description="N-linked (GlcNAc...) asparagine" evidence="2">
    <location>
        <position position="82"/>
    </location>
</feature>
<feature type="glycosylation site" description="N-linked (GlcNAc...) asparagine" evidence="2">
    <location>
        <position position="118"/>
    </location>
</feature>
<feature type="glycosylation site" description="N-linked (GlcNAc...) asparagine" evidence="2">
    <location>
        <position position="191"/>
    </location>
</feature>
<feature type="glycosylation site" description="N-linked (GlcNAc...) asparagine" evidence="2">
    <location>
        <position position="207"/>
    </location>
</feature>
<feature type="glycosylation site" description="N-linked (GlcNAc...) asparagine" evidence="2">
    <location>
        <position position="243"/>
    </location>
</feature>
<feature type="glycosylation site" description="N-linked (GlcNAc...) asparagine" evidence="2">
    <location>
        <position position="304"/>
    </location>
</feature>
<feature type="glycosylation site" description="N-linked (GlcNAc...) asparagine" evidence="2">
    <location>
        <position position="340"/>
    </location>
</feature>
<feature type="glycosylation site" description="N-linked (GlcNAc...) asparagine" evidence="2">
    <location>
        <position position="347"/>
    </location>
</feature>
<feature type="glycosylation site" description="N-linked (GlcNAc...) asparagine" evidence="2">
    <location>
        <position position="386"/>
    </location>
</feature>
<feature type="glycosylation site" description="N-linked (GlcNAc...) asparagine" evidence="2">
    <location>
        <position position="393"/>
    </location>
</feature>
<feature type="glycosylation site" description="N-linked (GlcNAc...) asparagine" evidence="2">
    <location>
        <position position="403"/>
    </location>
</feature>
<feature type="glycosylation site" description="N-linked (GlcNAc...) asparagine" evidence="2">
    <location>
        <position position="439"/>
    </location>
</feature>
<feature type="glycosylation site" description="N-linked (GlcNAc...) asparagine" evidence="2">
    <location>
        <position position="446"/>
    </location>
</feature>
<feature type="glycosylation site" description="N-linked (GlcNAc...) asparagine" evidence="2">
    <location>
        <position position="462"/>
    </location>
</feature>
<accession>Q5N9X2</accession>
<accession>A2ZZG8</accession>
<accession>B7EFK2</accession>
<accession>O49232</accession>